<evidence type="ECO:0000255" key="1">
    <source>
        <dbReference type="HAMAP-Rule" id="MF_00270"/>
    </source>
</evidence>
<evidence type="ECO:0000305" key="2"/>
<dbReference type="EMBL" id="AE017321">
    <property type="protein sequence ID" value="AAW71089.1"/>
    <property type="molecule type" value="Genomic_DNA"/>
</dbReference>
<dbReference type="RefSeq" id="WP_011256699.1">
    <property type="nucleotide sequence ID" value="NC_006833.1"/>
</dbReference>
<dbReference type="SMR" id="Q5GSD5"/>
<dbReference type="STRING" id="292805.Wbm0501"/>
<dbReference type="KEGG" id="wbm:Wbm0501"/>
<dbReference type="eggNOG" id="COG0238">
    <property type="taxonomic scope" value="Bacteria"/>
</dbReference>
<dbReference type="HOGENOM" id="CLU_148710_2_1_5"/>
<dbReference type="Proteomes" id="UP000000534">
    <property type="component" value="Chromosome"/>
</dbReference>
<dbReference type="GO" id="GO:0022627">
    <property type="term" value="C:cytosolic small ribosomal subunit"/>
    <property type="evidence" value="ECO:0007669"/>
    <property type="project" value="TreeGrafter"/>
</dbReference>
<dbReference type="GO" id="GO:0070181">
    <property type="term" value="F:small ribosomal subunit rRNA binding"/>
    <property type="evidence" value="ECO:0007669"/>
    <property type="project" value="TreeGrafter"/>
</dbReference>
<dbReference type="GO" id="GO:0003735">
    <property type="term" value="F:structural constituent of ribosome"/>
    <property type="evidence" value="ECO:0007669"/>
    <property type="project" value="InterPro"/>
</dbReference>
<dbReference type="GO" id="GO:0006412">
    <property type="term" value="P:translation"/>
    <property type="evidence" value="ECO:0007669"/>
    <property type="project" value="UniProtKB-UniRule"/>
</dbReference>
<dbReference type="Gene3D" id="4.10.640.10">
    <property type="entry name" value="Ribosomal protein S18"/>
    <property type="match status" value="1"/>
</dbReference>
<dbReference type="HAMAP" id="MF_00270">
    <property type="entry name" value="Ribosomal_bS18"/>
    <property type="match status" value="1"/>
</dbReference>
<dbReference type="InterPro" id="IPR001648">
    <property type="entry name" value="Ribosomal_bS18"/>
</dbReference>
<dbReference type="InterPro" id="IPR018275">
    <property type="entry name" value="Ribosomal_bS18_CS"/>
</dbReference>
<dbReference type="InterPro" id="IPR036870">
    <property type="entry name" value="Ribosomal_bS18_sf"/>
</dbReference>
<dbReference type="NCBIfam" id="TIGR00165">
    <property type="entry name" value="S18"/>
    <property type="match status" value="1"/>
</dbReference>
<dbReference type="PANTHER" id="PTHR13479">
    <property type="entry name" value="30S RIBOSOMAL PROTEIN S18"/>
    <property type="match status" value="1"/>
</dbReference>
<dbReference type="PANTHER" id="PTHR13479:SF40">
    <property type="entry name" value="SMALL RIBOSOMAL SUBUNIT PROTEIN BS18M"/>
    <property type="match status" value="1"/>
</dbReference>
<dbReference type="Pfam" id="PF01084">
    <property type="entry name" value="Ribosomal_S18"/>
    <property type="match status" value="1"/>
</dbReference>
<dbReference type="PRINTS" id="PR00974">
    <property type="entry name" value="RIBOSOMALS18"/>
</dbReference>
<dbReference type="SUPFAM" id="SSF46911">
    <property type="entry name" value="Ribosomal protein S18"/>
    <property type="match status" value="1"/>
</dbReference>
<dbReference type="PROSITE" id="PS00057">
    <property type="entry name" value="RIBOSOMAL_S18"/>
    <property type="match status" value="1"/>
</dbReference>
<sequence length="91" mass="10574">MTKKRNNFNDSYVSVNNRTGFKRSKVCPLATSQDEDIDYKNTDLLSRFTSDYGRILPRRLTGVCAKKQRKLRLAIIRARFLALVPYCTKKV</sequence>
<reference key="1">
    <citation type="journal article" date="2005" name="PLoS Biol.">
        <title>The Wolbachia genome of Brugia malayi: endosymbiont evolution within a human pathogenic nematode.</title>
        <authorList>
            <person name="Foster J."/>
            <person name="Ganatra M."/>
            <person name="Kamal I."/>
            <person name="Ware J."/>
            <person name="Makarova K."/>
            <person name="Ivanova N."/>
            <person name="Bhattacharyya A."/>
            <person name="Kapatral V."/>
            <person name="Kumar S."/>
            <person name="Posfai J."/>
            <person name="Vincze T."/>
            <person name="Ingram J."/>
            <person name="Moran L."/>
            <person name="Lapidus A."/>
            <person name="Omelchenko M."/>
            <person name="Kyrpides N."/>
            <person name="Ghedin E."/>
            <person name="Wang S."/>
            <person name="Goltsman E."/>
            <person name="Joukov V."/>
            <person name="Ostrovskaya O."/>
            <person name="Tsukerman K."/>
            <person name="Mazur M."/>
            <person name="Comb D."/>
            <person name="Koonin E."/>
            <person name="Slatko B."/>
        </authorList>
    </citation>
    <scope>NUCLEOTIDE SEQUENCE [LARGE SCALE GENOMIC DNA]</scope>
    <source>
        <strain>TRS</strain>
    </source>
</reference>
<accession>Q5GSD5</accession>
<keyword id="KW-1185">Reference proteome</keyword>
<keyword id="KW-0687">Ribonucleoprotein</keyword>
<keyword id="KW-0689">Ribosomal protein</keyword>
<keyword id="KW-0694">RNA-binding</keyword>
<keyword id="KW-0699">rRNA-binding</keyword>
<proteinExistence type="inferred from homology"/>
<comment type="function">
    <text evidence="1">Binds as a heterodimer with protein bS6 to the central domain of the 16S rRNA, where it helps stabilize the platform of the 30S subunit.</text>
</comment>
<comment type="subunit">
    <text evidence="1">Part of the 30S ribosomal subunit. Forms a tight heterodimer with protein bS6.</text>
</comment>
<comment type="similarity">
    <text evidence="1">Belongs to the bacterial ribosomal protein bS18 family.</text>
</comment>
<gene>
    <name evidence="1" type="primary">rpsR</name>
    <name type="ordered locus">Wbm0501</name>
</gene>
<protein>
    <recommendedName>
        <fullName evidence="1">Small ribosomal subunit protein bS18</fullName>
    </recommendedName>
    <alternativeName>
        <fullName evidence="2">30S ribosomal protein S18</fullName>
    </alternativeName>
</protein>
<name>RS18_WOLTR</name>
<feature type="chain" id="PRO_1000003656" description="Small ribosomal subunit protein bS18">
    <location>
        <begin position="1"/>
        <end position="91"/>
    </location>
</feature>
<organism>
    <name type="scientific">Wolbachia sp. subsp. Brugia malayi (strain TRS)</name>
    <dbReference type="NCBI Taxonomy" id="292805"/>
    <lineage>
        <taxon>Bacteria</taxon>
        <taxon>Pseudomonadati</taxon>
        <taxon>Pseudomonadota</taxon>
        <taxon>Alphaproteobacteria</taxon>
        <taxon>Rickettsiales</taxon>
        <taxon>Anaplasmataceae</taxon>
        <taxon>Wolbachieae</taxon>
        <taxon>Wolbachia</taxon>
    </lineage>
</organism>